<name>TRUB_BACP2</name>
<reference key="1">
    <citation type="journal article" date="2007" name="PLoS ONE">
        <title>Paradoxical DNA repair and peroxide resistance gene conservation in Bacillus pumilus SAFR-032.</title>
        <authorList>
            <person name="Gioia J."/>
            <person name="Yerrapragada S."/>
            <person name="Qin X."/>
            <person name="Jiang H."/>
            <person name="Igboeli O.C."/>
            <person name="Muzny D."/>
            <person name="Dugan-Rocha S."/>
            <person name="Ding Y."/>
            <person name="Hawes A."/>
            <person name="Liu W."/>
            <person name="Perez L."/>
            <person name="Kovar C."/>
            <person name="Dinh H."/>
            <person name="Lee S."/>
            <person name="Nazareth L."/>
            <person name="Blyth P."/>
            <person name="Holder M."/>
            <person name="Buhay C."/>
            <person name="Tirumalai M.R."/>
            <person name="Liu Y."/>
            <person name="Dasgupta I."/>
            <person name="Bokhetache L."/>
            <person name="Fujita M."/>
            <person name="Karouia F."/>
            <person name="Eswara Moorthy P."/>
            <person name="Siefert J."/>
            <person name="Uzman A."/>
            <person name="Buzumbo P."/>
            <person name="Verma A."/>
            <person name="Zwiya H."/>
            <person name="McWilliams B.D."/>
            <person name="Olowu A."/>
            <person name="Clinkenbeard K.D."/>
            <person name="Newcombe D."/>
            <person name="Golebiewski L."/>
            <person name="Petrosino J.F."/>
            <person name="Nicholson W.L."/>
            <person name="Fox G.E."/>
            <person name="Venkateswaran K."/>
            <person name="Highlander S.K."/>
            <person name="Weinstock G.M."/>
        </authorList>
    </citation>
    <scope>NUCLEOTIDE SEQUENCE [LARGE SCALE GENOMIC DNA]</scope>
    <source>
        <strain>SAFR-032</strain>
    </source>
</reference>
<evidence type="ECO:0000255" key="1">
    <source>
        <dbReference type="HAMAP-Rule" id="MF_01080"/>
    </source>
</evidence>
<sequence length="309" mass="34564">MINGVLLLHKERGMTSHDCVFKVRKILHTKKVGHTGTLDPEVSGVLPICIGRATKIVEYLTDKSKTYDAEITIGFSTTTEDQTGEIVEEKKVQNPISEEEIDAALKQFQGTIEQIPPMFSAVKIGGKKLYEYAREGIEIERPSREISIHRIERTTPALFENGTVSFRFTVLCSKGTYVRTLAVDIGKKLGFPAHMSHLIRTGSGDFTLDECITLDELRDISEEGTVDEHLVPIERALNHLPKWEINDTLASKVENGAVLPMPDEFAHFAEEDRVAVFAPSGRCMAIYMKHPTKQNLMKPAKILSQDKQS</sequence>
<feature type="chain" id="PRO_1000084549" description="tRNA pseudouridine synthase B">
    <location>
        <begin position="1"/>
        <end position="309"/>
    </location>
</feature>
<feature type="active site" description="Nucleophile" evidence="1">
    <location>
        <position position="39"/>
    </location>
</feature>
<dbReference type="EC" id="5.4.99.25" evidence="1"/>
<dbReference type="EMBL" id="CP000813">
    <property type="protein sequence ID" value="ABV62251.1"/>
    <property type="molecule type" value="Genomic_DNA"/>
</dbReference>
<dbReference type="RefSeq" id="WP_012009995.1">
    <property type="nucleotide sequence ID" value="NZ_VEIA01000004.1"/>
</dbReference>
<dbReference type="SMR" id="A8FDD4"/>
<dbReference type="STRING" id="315750.BPUM_1569"/>
<dbReference type="GeneID" id="5620832"/>
<dbReference type="KEGG" id="bpu:BPUM_1569"/>
<dbReference type="eggNOG" id="COG0130">
    <property type="taxonomic scope" value="Bacteria"/>
</dbReference>
<dbReference type="HOGENOM" id="CLU_032087_0_1_9"/>
<dbReference type="OrthoDB" id="9802309at2"/>
<dbReference type="Proteomes" id="UP000001355">
    <property type="component" value="Chromosome"/>
</dbReference>
<dbReference type="GO" id="GO:0003723">
    <property type="term" value="F:RNA binding"/>
    <property type="evidence" value="ECO:0007669"/>
    <property type="project" value="InterPro"/>
</dbReference>
<dbReference type="GO" id="GO:0160148">
    <property type="term" value="F:tRNA pseudouridine(55) synthase activity"/>
    <property type="evidence" value="ECO:0007669"/>
    <property type="project" value="UniProtKB-EC"/>
</dbReference>
<dbReference type="GO" id="GO:1990481">
    <property type="term" value="P:mRNA pseudouridine synthesis"/>
    <property type="evidence" value="ECO:0007669"/>
    <property type="project" value="TreeGrafter"/>
</dbReference>
<dbReference type="GO" id="GO:0031119">
    <property type="term" value="P:tRNA pseudouridine synthesis"/>
    <property type="evidence" value="ECO:0007669"/>
    <property type="project" value="UniProtKB-UniRule"/>
</dbReference>
<dbReference type="CDD" id="cd02573">
    <property type="entry name" value="PseudoU_synth_EcTruB"/>
    <property type="match status" value="1"/>
</dbReference>
<dbReference type="FunFam" id="3.30.2350.10:FF:000011">
    <property type="entry name" value="tRNA pseudouridine synthase B"/>
    <property type="match status" value="1"/>
</dbReference>
<dbReference type="Gene3D" id="3.30.2350.10">
    <property type="entry name" value="Pseudouridine synthase"/>
    <property type="match status" value="1"/>
</dbReference>
<dbReference type="HAMAP" id="MF_01080">
    <property type="entry name" value="TruB_bact"/>
    <property type="match status" value="1"/>
</dbReference>
<dbReference type="InterPro" id="IPR020103">
    <property type="entry name" value="PsdUridine_synth_cat_dom_sf"/>
</dbReference>
<dbReference type="InterPro" id="IPR002501">
    <property type="entry name" value="PsdUridine_synth_N"/>
</dbReference>
<dbReference type="InterPro" id="IPR014780">
    <property type="entry name" value="tRNA_psdUridine_synth_TruB"/>
</dbReference>
<dbReference type="InterPro" id="IPR032819">
    <property type="entry name" value="TruB_C"/>
</dbReference>
<dbReference type="NCBIfam" id="TIGR00431">
    <property type="entry name" value="TruB"/>
    <property type="match status" value="1"/>
</dbReference>
<dbReference type="PANTHER" id="PTHR13767:SF2">
    <property type="entry name" value="PSEUDOURIDYLATE SYNTHASE TRUB1"/>
    <property type="match status" value="1"/>
</dbReference>
<dbReference type="PANTHER" id="PTHR13767">
    <property type="entry name" value="TRNA-PSEUDOURIDINE SYNTHASE"/>
    <property type="match status" value="1"/>
</dbReference>
<dbReference type="Pfam" id="PF16198">
    <property type="entry name" value="TruB_C_2"/>
    <property type="match status" value="1"/>
</dbReference>
<dbReference type="Pfam" id="PF01509">
    <property type="entry name" value="TruB_N"/>
    <property type="match status" value="1"/>
</dbReference>
<dbReference type="SUPFAM" id="SSF55120">
    <property type="entry name" value="Pseudouridine synthase"/>
    <property type="match status" value="1"/>
</dbReference>
<proteinExistence type="inferred from homology"/>
<organism>
    <name type="scientific">Bacillus pumilus (strain SAFR-032)</name>
    <dbReference type="NCBI Taxonomy" id="315750"/>
    <lineage>
        <taxon>Bacteria</taxon>
        <taxon>Bacillati</taxon>
        <taxon>Bacillota</taxon>
        <taxon>Bacilli</taxon>
        <taxon>Bacillales</taxon>
        <taxon>Bacillaceae</taxon>
        <taxon>Bacillus</taxon>
    </lineage>
</organism>
<accession>A8FDD4</accession>
<gene>
    <name evidence="1" type="primary">truB</name>
    <name type="ordered locus">BPUM_1569</name>
</gene>
<protein>
    <recommendedName>
        <fullName evidence="1">tRNA pseudouridine synthase B</fullName>
        <ecNumber evidence="1">5.4.99.25</ecNumber>
    </recommendedName>
    <alternativeName>
        <fullName evidence="1">tRNA pseudouridine(55) synthase</fullName>
        <shortName evidence="1">Psi55 synthase</shortName>
    </alternativeName>
    <alternativeName>
        <fullName evidence="1">tRNA pseudouridylate synthase</fullName>
    </alternativeName>
    <alternativeName>
        <fullName evidence="1">tRNA-uridine isomerase</fullName>
    </alternativeName>
</protein>
<comment type="function">
    <text evidence="1">Responsible for synthesis of pseudouridine from uracil-55 in the psi GC loop of transfer RNAs.</text>
</comment>
<comment type="catalytic activity">
    <reaction evidence="1">
        <text>uridine(55) in tRNA = pseudouridine(55) in tRNA</text>
        <dbReference type="Rhea" id="RHEA:42532"/>
        <dbReference type="Rhea" id="RHEA-COMP:10101"/>
        <dbReference type="Rhea" id="RHEA-COMP:10102"/>
        <dbReference type="ChEBI" id="CHEBI:65314"/>
        <dbReference type="ChEBI" id="CHEBI:65315"/>
        <dbReference type="EC" id="5.4.99.25"/>
    </reaction>
</comment>
<comment type="similarity">
    <text evidence="1">Belongs to the pseudouridine synthase TruB family. Type 1 subfamily.</text>
</comment>
<keyword id="KW-0413">Isomerase</keyword>
<keyword id="KW-0819">tRNA processing</keyword>